<proteinExistence type="inferred from homology"/>
<protein>
    <recommendedName>
        <fullName evidence="1">Large ribosomal subunit protein bL21</fullName>
    </recommendedName>
    <alternativeName>
        <fullName evidence="2">50S ribosomal protein L21</fullName>
    </alternativeName>
</protein>
<sequence>MSYAIIQTGGKQYKVKAGEILKIERLEDSKPETKIEFKEILAYGDDKTIEVGSPVVEGAKVEADLVENGKNRTILIFKKRRRQNSRRKNGHRQQYSLIRISKIFSKDGKVLSEAEKMVKPTKKVEKVETEVASK</sequence>
<feature type="chain" id="PRO_0000270703" description="Large ribosomal subunit protein bL21">
    <location>
        <begin position="1"/>
        <end position="134"/>
    </location>
</feature>
<evidence type="ECO:0000255" key="1">
    <source>
        <dbReference type="HAMAP-Rule" id="MF_01363"/>
    </source>
</evidence>
<evidence type="ECO:0000305" key="2"/>
<dbReference type="EMBL" id="CP000084">
    <property type="protein sequence ID" value="AAZ21041.1"/>
    <property type="molecule type" value="Genomic_DNA"/>
</dbReference>
<dbReference type="RefSeq" id="WP_006997690.1">
    <property type="nucleotide sequence ID" value="NC_007205.1"/>
</dbReference>
<dbReference type="SMR" id="Q4FP48"/>
<dbReference type="STRING" id="335992.SAR11_0220"/>
<dbReference type="GeneID" id="66294717"/>
<dbReference type="KEGG" id="pub:SAR11_0220"/>
<dbReference type="eggNOG" id="COG0261">
    <property type="taxonomic scope" value="Bacteria"/>
</dbReference>
<dbReference type="HOGENOM" id="CLU_061463_1_2_5"/>
<dbReference type="OrthoDB" id="9813334at2"/>
<dbReference type="Proteomes" id="UP000002528">
    <property type="component" value="Chromosome"/>
</dbReference>
<dbReference type="GO" id="GO:0005737">
    <property type="term" value="C:cytoplasm"/>
    <property type="evidence" value="ECO:0007669"/>
    <property type="project" value="UniProtKB-ARBA"/>
</dbReference>
<dbReference type="GO" id="GO:1990904">
    <property type="term" value="C:ribonucleoprotein complex"/>
    <property type="evidence" value="ECO:0007669"/>
    <property type="project" value="UniProtKB-KW"/>
</dbReference>
<dbReference type="GO" id="GO:0005840">
    <property type="term" value="C:ribosome"/>
    <property type="evidence" value="ECO:0007669"/>
    <property type="project" value="UniProtKB-KW"/>
</dbReference>
<dbReference type="GO" id="GO:0019843">
    <property type="term" value="F:rRNA binding"/>
    <property type="evidence" value="ECO:0007669"/>
    <property type="project" value="UniProtKB-UniRule"/>
</dbReference>
<dbReference type="GO" id="GO:0003735">
    <property type="term" value="F:structural constituent of ribosome"/>
    <property type="evidence" value="ECO:0007669"/>
    <property type="project" value="InterPro"/>
</dbReference>
<dbReference type="GO" id="GO:0006412">
    <property type="term" value="P:translation"/>
    <property type="evidence" value="ECO:0007669"/>
    <property type="project" value="UniProtKB-UniRule"/>
</dbReference>
<dbReference type="HAMAP" id="MF_01363">
    <property type="entry name" value="Ribosomal_bL21"/>
    <property type="match status" value="1"/>
</dbReference>
<dbReference type="InterPro" id="IPR028909">
    <property type="entry name" value="bL21-like"/>
</dbReference>
<dbReference type="InterPro" id="IPR036164">
    <property type="entry name" value="bL21-like_sf"/>
</dbReference>
<dbReference type="InterPro" id="IPR001787">
    <property type="entry name" value="Ribosomal_bL21"/>
</dbReference>
<dbReference type="NCBIfam" id="TIGR00061">
    <property type="entry name" value="L21"/>
    <property type="match status" value="1"/>
</dbReference>
<dbReference type="PANTHER" id="PTHR21349">
    <property type="entry name" value="50S RIBOSOMAL PROTEIN L21"/>
    <property type="match status" value="1"/>
</dbReference>
<dbReference type="PANTHER" id="PTHR21349:SF0">
    <property type="entry name" value="LARGE RIBOSOMAL SUBUNIT PROTEIN BL21M"/>
    <property type="match status" value="1"/>
</dbReference>
<dbReference type="Pfam" id="PF00829">
    <property type="entry name" value="Ribosomal_L21p"/>
    <property type="match status" value="1"/>
</dbReference>
<dbReference type="SUPFAM" id="SSF141091">
    <property type="entry name" value="L21p-like"/>
    <property type="match status" value="1"/>
</dbReference>
<comment type="function">
    <text evidence="1">This protein binds to 23S rRNA in the presence of protein L20.</text>
</comment>
<comment type="subunit">
    <text evidence="1">Part of the 50S ribosomal subunit. Contacts protein L20.</text>
</comment>
<comment type="similarity">
    <text evidence="1">Belongs to the bacterial ribosomal protein bL21 family.</text>
</comment>
<organism>
    <name type="scientific">Pelagibacter ubique (strain HTCC1062)</name>
    <dbReference type="NCBI Taxonomy" id="335992"/>
    <lineage>
        <taxon>Bacteria</taxon>
        <taxon>Pseudomonadati</taxon>
        <taxon>Pseudomonadota</taxon>
        <taxon>Alphaproteobacteria</taxon>
        <taxon>Candidatus Pelagibacterales</taxon>
        <taxon>Candidatus Pelagibacteraceae</taxon>
        <taxon>Candidatus Pelagibacter</taxon>
    </lineage>
</organism>
<keyword id="KW-1185">Reference proteome</keyword>
<keyword id="KW-0687">Ribonucleoprotein</keyword>
<keyword id="KW-0689">Ribosomal protein</keyword>
<keyword id="KW-0694">RNA-binding</keyword>
<keyword id="KW-0699">rRNA-binding</keyword>
<reference key="1">
    <citation type="journal article" date="2005" name="Science">
        <title>Genome streamlining in a cosmopolitan oceanic bacterium.</title>
        <authorList>
            <person name="Giovannoni S.J."/>
            <person name="Tripp H.J."/>
            <person name="Givan S."/>
            <person name="Podar M."/>
            <person name="Vergin K.L."/>
            <person name="Baptista D."/>
            <person name="Bibbs L."/>
            <person name="Eads J."/>
            <person name="Richardson T.H."/>
            <person name="Noordewier M."/>
            <person name="Rappe M.S."/>
            <person name="Short J.M."/>
            <person name="Carrington J.C."/>
            <person name="Mathur E.J."/>
        </authorList>
    </citation>
    <scope>NUCLEOTIDE SEQUENCE [LARGE SCALE GENOMIC DNA]</scope>
    <source>
        <strain>HTCC1062</strain>
    </source>
</reference>
<gene>
    <name evidence="1" type="primary">rplU</name>
    <name type="ordered locus">SAR11_0220</name>
</gene>
<name>RL21_PELUB</name>
<accession>Q4FP48</accession>